<gene>
    <name evidence="1" type="primary">psmB1</name>
    <name type="ordered locus">PYRAB02270</name>
    <name type="ORF">PAB2199</name>
</gene>
<organism>
    <name type="scientific">Pyrococcus abyssi (strain GE5 / Orsay)</name>
    <dbReference type="NCBI Taxonomy" id="272844"/>
    <lineage>
        <taxon>Archaea</taxon>
        <taxon>Methanobacteriati</taxon>
        <taxon>Methanobacteriota</taxon>
        <taxon>Thermococci</taxon>
        <taxon>Thermococcales</taxon>
        <taxon>Thermococcaceae</taxon>
        <taxon>Pyrococcus</taxon>
    </lineage>
</organism>
<reference key="1">
    <citation type="journal article" date="2003" name="Mol. Microbiol.">
        <title>An integrated analysis of the genome of the hyperthermophilic archaeon Pyrococcus abyssi.</title>
        <authorList>
            <person name="Cohen G.N."/>
            <person name="Barbe V."/>
            <person name="Flament D."/>
            <person name="Galperin M."/>
            <person name="Heilig R."/>
            <person name="Lecompte O."/>
            <person name="Poch O."/>
            <person name="Prieur D."/>
            <person name="Querellou J."/>
            <person name="Ripp R."/>
            <person name="Thierry J.-C."/>
            <person name="Van der Oost J."/>
            <person name="Weissenbach J."/>
            <person name="Zivanovic Y."/>
            <person name="Forterre P."/>
        </authorList>
    </citation>
    <scope>NUCLEOTIDE SEQUENCE [LARGE SCALE GENOMIC DNA]</scope>
    <source>
        <strain>GE5 / Orsay</strain>
    </source>
</reference>
<reference key="2">
    <citation type="journal article" date="2012" name="Curr. Microbiol.">
        <title>Re-annotation of two hyperthermophilic archaea Pyrococcus abyssi GE5 and Pyrococcus furiosus DSM 3638.</title>
        <authorList>
            <person name="Gao J."/>
            <person name="Wang J."/>
        </authorList>
    </citation>
    <scope>GENOME REANNOTATION</scope>
    <source>
        <strain>GE5 / Orsay</strain>
    </source>
</reference>
<protein>
    <recommendedName>
        <fullName evidence="1">Proteasome subunit beta 1</fullName>
        <ecNumber evidence="1">3.4.25.1</ecNumber>
    </recommendedName>
    <alternativeName>
        <fullName evidence="1">20S proteasome beta subunit 1</fullName>
    </alternativeName>
    <alternativeName>
        <fullName evidence="1">Proteasome core protein PsmB 1</fullName>
    </alternativeName>
</protein>
<comment type="function">
    <text evidence="1">Component of the proteasome core, a large protease complex with broad specificity involved in protein degradation.</text>
</comment>
<comment type="catalytic activity">
    <reaction evidence="1">
        <text>Cleavage of peptide bonds with very broad specificity.</text>
        <dbReference type="EC" id="3.4.25.1"/>
    </reaction>
</comment>
<comment type="activity regulation">
    <text evidence="1">The formation of the proteasomal ATPase PAN-20S proteasome complex, via the docking of the C-termini of PAN into the intersubunit pockets in the alpha-rings, triggers opening of the gate for substrate entry. Interconversion between the open-gate and close-gate conformations leads to a dynamic regulation of the 20S proteasome proteolysis activity.</text>
</comment>
<comment type="subunit">
    <text evidence="1">The 20S proteasome core is composed of 14 alpha and 14 beta subunits that assemble into four stacked heptameric rings, resulting in a barrel-shaped structure. The two inner rings, each composed of seven catalytic beta subunits, are sandwiched by two outer rings, each composed of seven alpha subunits. The catalytic chamber with the active sites is on the inside of the barrel. Has a gated structure, the ends of the cylinder being occluded by the N-termini of the alpha-subunits. Is capped at one or both ends by the proteasome regulatory ATPase, PAN.</text>
</comment>
<comment type="subcellular location">
    <subcellularLocation>
        <location evidence="1">Cytoplasm</location>
    </subcellularLocation>
</comment>
<comment type="similarity">
    <text evidence="1">Belongs to the peptidase T1B family.</text>
</comment>
<proteinExistence type="inferred from homology"/>
<accession>Q9V247</accession>
<accession>G8ZG62</accession>
<evidence type="ECO:0000255" key="1">
    <source>
        <dbReference type="HAMAP-Rule" id="MF_02113"/>
    </source>
</evidence>
<dbReference type="EC" id="3.4.25.1" evidence="1"/>
<dbReference type="EMBL" id="AJ248283">
    <property type="protein sequence ID" value="CAB49151.1"/>
    <property type="molecule type" value="Genomic_DNA"/>
</dbReference>
<dbReference type="EMBL" id="HE613800">
    <property type="protein sequence ID" value="CCE69603.1"/>
    <property type="molecule type" value="Genomic_DNA"/>
</dbReference>
<dbReference type="PIR" id="H75212">
    <property type="entry name" value="H75212"/>
</dbReference>
<dbReference type="RefSeq" id="WP_010867351.1">
    <property type="nucleotide sequence ID" value="NC_000868.1"/>
</dbReference>
<dbReference type="SMR" id="Q9V247"/>
<dbReference type="STRING" id="272844.PAB2199"/>
<dbReference type="MEROPS" id="T01.002"/>
<dbReference type="KEGG" id="pab:PAB2199"/>
<dbReference type="PATRIC" id="fig|272844.11.peg.243"/>
<dbReference type="eggNOG" id="arCOG00970">
    <property type="taxonomic scope" value="Archaea"/>
</dbReference>
<dbReference type="HOGENOM" id="CLU_035750_7_2_2"/>
<dbReference type="OrthoDB" id="6330at2157"/>
<dbReference type="PhylomeDB" id="Q9V247"/>
<dbReference type="Proteomes" id="UP000000810">
    <property type="component" value="Chromosome"/>
</dbReference>
<dbReference type="Proteomes" id="UP000009139">
    <property type="component" value="Chromosome"/>
</dbReference>
<dbReference type="GO" id="GO:0005737">
    <property type="term" value="C:cytoplasm"/>
    <property type="evidence" value="ECO:0007669"/>
    <property type="project" value="UniProtKB-SubCell"/>
</dbReference>
<dbReference type="GO" id="GO:0019774">
    <property type="term" value="C:proteasome core complex, beta-subunit complex"/>
    <property type="evidence" value="ECO:0007669"/>
    <property type="project" value="UniProtKB-UniRule"/>
</dbReference>
<dbReference type="GO" id="GO:0004298">
    <property type="term" value="F:threonine-type endopeptidase activity"/>
    <property type="evidence" value="ECO:0007669"/>
    <property type="project" value="UniProtKB-UniRule"/>
</dbReference>
<dbReference type="GO" id="GO:0010498">
    <property type="term" value="P:proteasomal protein catabolic process"/>
    <property type="evidence" value="ECO:0007669"/>
    <property type="project" value="UniProtKB-UniRule"/>
</dbReference>
<dbReference type="CDD" id="cd03764">
    <property type="entry name" value="proteasome_beta_archeal"/>
    <property type="match status" value="1"/>
</dbReference>
<dbReference type="Gene3D" id="3.60.20.10">
    <property type="entry name" value="Glutamine Phosphoribosylpyrophosphate, subunit 1, domain 1"/>
    <property type="match status" value="1"/>
</dbReference>
<dbReference type="HAMAP" id="MF_02113_A">
    <property type="entry name" value="Proteasome_B_A"/>
    <property type="match status" value="1"/>
</dbReference>
<dbReference type="InterPro" id="IPR029055">
    <property type="entry name" value="Ntn_hydrolases_N"/>
</dbReference>
<dbReference type="InterPro" id="IPR019983">
    <property type="entry name" value="Pept_T1A_Psome_bsu_arc"/>
</dbReference>
<dbReference type="InterPro" id="IPR016050">
    <property type="entry name" value="Proteasome_bsu_CS"/>
</dbReference>
<dbReference type="InterPro" id="IPR001353">
    <property type="entry name" value="Proteasome_sua/b"/>
</dbReference>
<dbReference type="InterPro" id="IPR023333">
    <property type="entry name" value="Proteasome_suB-type"/>
</dbReference>
<dbReference type="NCBIfam" id="TIGR03634">
    <property type="entry name" value="arc_protsome_B"/>
    <property type="match status" value="1"/>
</dbReference>
<dbReference type="PANTHER" id="PTHR32194:SF0">
    <property type="entry name" value="ATP-DEPENDENT PROTEASE SUBUNIT HSLV"/>
    <property type="match status" value="1"/>
</dbReference>
<dbReference type="PANTHER" id="PTHR32194">
    <property type="entry name" value="METALLOPROTEASE TLDD"/>
    <property type="match status" value="1"/>
</dbReference>
<dbReference type="Pfam" id="PF00227">
    <property type="entry name" value="Proteasome"/>
    <property type="match status" value="1"/>
</dbReference>
<dbReference type="SUPFAM" id="SSF56235">
    <property type="entry name" value="N-terminal nucleophile aminohydrolases (Ntn hydrolases)"/>
    <property type="match status" value="1"/>
</dbReference>
<dbReference type="PROSITE" id="PS00854">
    <property type="entry name" value="PROTEASOME_BETA_1"/>
    <property type="match status" value="1"/>
</dbReference>
<dbReference type="PROSITE" id="PS51476">
    <property type="entry name" value="PROTEASOME_BETA_2"/>
    <property type="match status" value="1"/>
</dbReference>
<name>PSB1_PYRAB</name>
<feature type="propeptide" id="PRO_0000397408" description="Removed in mature form; by autocatalysis" evidence="1">
    <location>
        <begin position="1"/>
        <end position="6"/>
    </location>
</feature>
<feature type="chain" id="PRO_0000397409" description="Proteasome subunit beta 1">
    <location>
        <begin position="7"/>
        <end position="197"/>
    </location>
</feature>
<feature type="active site" description="Nucleophile" evidence="1">
    <location>
        <position position="7"/>
    </location>
</feature>
<sequence length="197" mass="21568">MNRKTGTTTVGIRVKDGVILAADTQASLDHMVETLNIRKIIPITDRIAITTAGSVGDVQMIARILEAEARYYQFTWGRPMTTRAMANLLSNILNENKWFPYLVQIIIGGYVDEPTIANLDPLGGLIFDDYTATGSGTPFAIAILEEGYRKNLGIEKAKELAIKAVKAAGARDVYTGSKKIQVVTITKDGMKEEFVTL</sequence>
<keyword id="KW-0068">Autocatalytic cleavage</keyword>
<keyword id="KW-0963">Cytoplasm</keyword>
<keyword id="KW-0378">Hydrolase</keyword>
<keyword id="KW-0645">Protease</keyword>
<keyword id="KW-0647">Proteasome</keyword>
<keyword id="KW-0888">Threonine protease</keyword>
<keyword id="KW-0865">Zymogen</keyword>